<name>ACYP_ALKEH</name>
<keyword id="KW-0378">Hydrolase</keyword>
<keyword id="KW-1185">Reference proteome</keyword>
<feature type="chain" id="PRO_0000326647" description="Acylphosphatase">
    <location>
        <begin position="1"/>
        <end position="89"/>
    </location>
</feature>
<feature type="domain" description="Acylphosphatase-like" evidence="1">
    <location>
        <begin position="4"/>
        <end position="89"/>
    </location>
</feature>
<feature type="active site" evidence="1">
    <location>
        <position position="19"/>
    </location>
</feature>
<feature type="active site" evidence="1">
    <location>
        <position position="37"/>
    </location>
</feature>
<evidence type="ECO:0000255" key="1">
    <source>
        <dbReference type="PROSITE-ProRule" id="PRU00520"/>
    </source>
</evidence>
<evidence type="ECO:0000305" key="2"/>
<reference key="1">
    <citation type="submission" date="2006-08" db="EMBL/GenBank/DDBJ databases">
        <title>Complete sequence of Alkalilimnicola ehrilichei MLHE-1.</title>
        <authorList>
            <person name="Copeland A."/>
            <person name="Lucas S."/>
            <person name="Lapidus A."/>
            <person name="Barry K."/>
            <person name="Detter J.C."/>
            <person name="Glavina del Rio T."/>
            <person name="Hammon N."/>
            <person name="Israni S."/>
            <person name="Dalin E."/>
            <person name="Tice H."/>
            <person name="Pitluck S."/>
            <person name="Sims D."/>
            <person name="Brettin T."/>
            <person name="Bruce D."/>
            <person name="Han C."/>
            <person name="Tapia R."/>
            <person name="Gilna P."/>
            <person name="Schmutz J."/>
            <person name="Larimer F."/>
            <person name="Land M."/>
            <person name="Hauser L."/>
            <person name="Kyrpides N."/>
            <person name="Mikhailova N."/>
            <person name="Oremland R.S."/>
            <person name="Hoeft S.E."/>
            <person name="Switzer-Blum J."/>
            <person name="Kulp T."/>
            <person name="King G."/>
            <person name="Tabita R."/>
            <person name="Witte B."/>
            <person name="Santini J.M."/>
            <person name="Basu P."/>
            <person name="Hollibaugh J.T."/>
            <person name="Xie G."/>
            <person name="Stolz J.F."/>
            <person name="Richardson P."/>
        </authorList>
    </citation>
    <scope>NUCLEOTIDE SEQUENCE [LARGE SCALE GENOMIC DNA]</scope>
    <source>
        <strain>ATCC BAA-1101 / DSM 17681 / MLHE-1</strain>
    </source>
</reference>
<dbReference type="EC" id="3.6.1.7"/>
<dbReference type="EMBL" id="CP000453">
    <property type="protein sequence ID" value="ABI55876.1"/>
    <property type="molecule type" value="Genomic_DNA"/>
</dbReference>
<dbReference type="RefSeq" id="WP_011628271.1">
    <property type="nucleotide sequence ID" value="NC_008340.1"/>
</dbReference>
<dbReference type="SMR" id="Q0ABB1"/>
<dbReference type="KEGG" id="aeh:Mlg_0522"/>
<dbReference type="eggNOG" id="COG1254">
    <property type="taxonomic scope" value="Bacteria"/>
</dbReference>
<dbReference type="HOGENOM" id="CLU_141932_1_3_6"/>
<dbReference type="OrthoDB" id="5295388at2"/>
<dbReference type="Proteomes" id="UP000001962">
    <property type="component" value="Chromosome"/>
</dbReference>
<dbReference type="GO" id="GO:0003998">
    <property type="term" value="F:acylphosphatase activity"/>
    <property type="evidence" value="ECO:0007669"/>
    <property type="project" value="UniProtKB-EC"/>
</dbReference>
<dbReference type="Gene3D" id="3.30.70.100">
    <property type="match status" value="1"/>
</dbReference>
<dbReference type="InterPro" id="IPR020456">
    <property type="entry name" value="Acylphosphatase"/>
</dbReference>
<dbReference type="InterPro" id="IPR001792">
    <property type="entry name" value="Acylphosphatase-like_dom"/>
</dbReference>
<dbReference type="InterPro" id="IPR036046">
    <property type="entry name" value="Acylphosphatase-like_dom_sf"/>
</dbReference>
<dbReference type="InterPro" id="IPR017968">
    <property type="entry name" value="Acylphosphatase_CS"/>
</dbReference>
<dbReference type="NCBIfam" id="NF011022">
    <property type="entry name" value="PRK14451.1"/>
    <property type="match status" value="1"/>
</dbReference>
<dbReference type="PANTHER" id="PTHR47268">
    <property type="entry name" value="ACYLPHOSPHATASE"/>
    <property type="match status" value="1"/>
</dbReference>
<dbReference type="PANTHER" id="PTHR47268:SF4">
    <property type="entry name" value="ACYLPHOSPHATASE"/>
    <property type="match status" value="1"/>
</dbReference>
<dbReference type="Pfam" id="PF00708">
    <property type="entry name" value="Acylphosphatase"/>
    <property type="match status" value="1"/>
</dbReference>
<dbReference type="SUPFAM" id="SSF54975">
    <property type="entry name" value="Acylphosphatase/BLUF domain-like"/>
    <property type="match status" value="1"/>
</dbReference>
<dbReference type="PROSITE" id="PS00150">
    <property type="entry name" value="ACYLPHOSPHATASE_1"/>
    <property type="match status" value="1"/>
</dbReference>
<dbReference type="PROSITE" id="PS00151">
    <property type="entry name" value="ACYLPHOSPHATASE_2"/>
    <property type="match status" value="1"/>
</dbReference>
<dbReference type="PROSITE" id="PS51160">
    <property type="entry name" value="ACYLPHOSPHATASE_3"/>
    <property type="match status" value="1"/>
</dbReference>
<sequence>MNESRRFLVSGTVQGVFFRSSAKRHAEQLGLSGYARNLVDGRVEVLAHGPTDALDELAKWLEEGPPNAQVTGVEVSAVGEQPPEGFRVL</sequence>
<proteinExistence type="inferred from homology"/>
<protein>
    <recommendedName>
        <fullName>Acylphosphatase</fullName>
        <ecNumber>3.6.1.7</ecNumber>
    </recommendedName>
    <alternativeName>
        <fullName>Acylphosphate phosphohydrolase</fullName>
    </alternativeName>
</protein>
<comment type="catalytic activity">
    <reaction>
        <text>an acyl phosphate + H2O = a carboxylate + phosphate + H(+)</text>
        <dbReference type="Rhea" id="RHEA:14965"/>
        <dbReference type="ChEBI" id="CHEBI:15377"/>
        <dbReference type="ChEBI" id="CHEBI:15378"/>
        <dbReference type="ChEBI" id="CHEBI:29067"/>
        <dbReference type="ChEBI" id="CHEBI:43474"/>
        <dbReference type="ChEBI" id="CHEBI:59918"/>
        <dbReference type="EC" id="3.6.1.7"/>
    </reaction>
</comment>
<comment type="similarity">
    <text evidence="2">Belongs to the acylphosphatase family.</text>
</comment>
<gene>
    <name type="primary">acyP</name>
    <name type="ordered locus">Mlg_0522</name>
</gene>
<accession>Q0ABB1</accession>
<organism>
    <name type="scientific">Alkalilimnicola ehrlichii (strain ATCC BAA-1101 / DSM 17681 / MLHE-1)</name>
    <dbReference type="NCBI Taxonomy" id="187272"/>
    <lineage>
        <taxon>Bacteria</taxon>
        <taxon>Pseudomonadati</taxon>
        <taxon>Pseudomonadota</taxon>
        <taxon>Gammaproteobacteria</taxon>
        <taxon>Chromatiales</taxon>
        <taxon>Ectothiorhodospiraceae</taxon>
        <taxon>Alkalilimnicola</taxon>
    </lineage>
</organism>